<keyword id="KW-1003">Cell membrane</keyword>
<keyword id="KW-0472">Membrane</keyword>
<keyword id="KW-1185">Reference proteome</keyword>
<keyword id="KW-0812">Transmembrane</keyword>
<keyword id="KW-1133">Transmembrane helix</keyword>
<comment type="subcellular location">
    <subcellularLocation>
        <location evidence="2">Cell membrane</location>
        <topology evidence="2">Multi-pass membrane protein</topology>
    </subcellularLocation>
</comment>
<dbReference type="EMBL" id="AL123456">
    <property type="protein sequence ID" value="CCP45054.1"/>
    <property type="molecule type" value="Genomic_DNA"/>
</dbReference>
<dbReference type="PIR" id="E70730">
    <property type="entry name" value="E70730"/>
</dbReference>
<dbReference type="RefSeq" id="NP_216789.1">
    <property type="nucleotide sequence ID" value="NC_000962.3"/>
</dbReference>
<dbReference type="RefSeq" id="WP_003411678.1">
    <property type="nucleotide sequence ID" value="NZ_NVQJ01000008.1"/>
</dbReference>
<dbReference type="SMR" id="P9WLF3"/>
<dbReference type="STRING" id="83332.Rv2273"/>
<dbReference type="PaxDb" id="83332-Rv2273"/>
<dbReference type="DNASU" id="888440"/>
<dbReference type="GeneID" id="888440"/>
<dbReference type="KEGG" id="mtu:Rv2273"/>
<dbReference type="KEGG" id="mtv:RVBD_2273"/>
<dbReference type="TubercuList" id="Rv2273"/>
<dbReference type="eggNOG" id="ENOG502ZUVD">
    <property type="taxonomic scope" value="Bacteria"/>
</dbReference>
<dbReference type="InParanoid" id="P9WLF3"/>
<dbReference type="OrthoDB" id="3701077at2"/>
<dbReference type="Proteomes" id="UP000001584">
    <property type="component" value="Chromosome"/>
</dbReference>
<dbReference type="GO" id="GO:0005886">
    <property type="term" value="C:plasma membrane"/>
    <property type="evidence" value="ECO:0007669"/>
    <property type="project" value="UniProtKB-SubCell"/>
</dbReference>
<dbReference type="InterPro" id="IPR003807">
    <property type="entry name" value="DUF202"/>
</dbReference>
<dbReference type="Pfam" id="PF02656">
    <property type="entry name" value="DUF202"/>
    <property type="match status" value="1"/>
</dbReference>
<proteinExistence type="predicted"/>
<reference key="1">
    <citation type="journal article" date="1998" name="Nature">
        <title>Deciphering the biology of Mycobacterium tuberculosis from the complete genome sequence.</title>
        <authorList>
            <person name="Cole S.T."/>
            <person name="Brosch R."/>
            <person name="Parkhill J."/>
            <person name="Garnier T."/>
            <person name="Churcher C.M."/>
            <person name="Harris D.E."/>
            <person name="Gordon S.V."/>
            <person name="Eiglmeier K."/>
            <person name="Gas S."/>
            <person name="Barry C.E. III"/>
            <person name="Tekaia F."/>
            <person name="Badcock K."/>
            <person name="Basham D."/>
            <person name="Brown D."/>
            <person name="Chillingworth T."/>
            <person name="Connor R."/>
            <person name="Davies R.M."/>
            <person name="Devlin K."/>
            <person name="Feltwell T."/>
            <person name="Gentles S."/>
            <person name="Hamlin N."/>
            <person name="Holroyd S."/>
            <person name="Hornsby T."/>
            <person name="Jagels K."/>
            <person name="Krogh A."/>
            <person name="McLean J."/>
            <person name="Moule S."/>
            <person name="Murphy L.D."/>
            <person name="Oliver S."/>
            <person name="Osborne J."/>
            <person name="Quail M.A."/>
            <person name="Rajandream M.A."/>
            <person name="Rogers J."/>
            <person name="Rutter S."/>
            <person name="Seeger K."/>
            <person name="Skelton S."/>
            <person name="Squares S."/>
            <person name="Squares R."/>
            <person name="Sulston J.E."/>
            <person name="Taylor K."/>
            <person name="Whitehead S."/>
            <person name="Barrell B.G."/>
        </authorList>
    </citation>
    <scope>NUCLEOTIDE SEQUENCE [LARGE SCALE GENOMIC DNA]</scope>
    <source>
        <strain>ATCC 25618 / H37Rv</strain>
    </source>
</reference>
<evidence type="ECO:0000255" key="1"/>
<evidence type="ECO:0000305" key="2"/>
<organism>
    <name type="scientific">Mycobacterium tuberculosis (strain ATCC 25618 / H37Rv)</name>
    <dbReference type="NCBI Taxonomy" id="83332"/>
    <lineage>
        <taxon>Bacteria</taxon>
        <taxon>Bacillati</taxon>
        <taxon>Actinomycetota</taxon>
        <taxon>Actinomycetes</taxon>
        <taxon>Mycobacteriales</taxon>
        <taxon>Mycobacteriaceae</taxon>
        <taxon>Mycobacterium</taxon>
        <taxon>Mycobacterium tuberculosis complex</taxon>
    </lineage>
</organism>
<sequence>MNRHSTAASDRGLQAERTTLAWTRTAFALLVNGVLLTLKDTQGADGPAGLIPAGLAGAAASCCYVIALQRQRALSHRPLPARITPRGQVHILATAVLVLMVVTAFAQLL</sequence>
<accession>P9WLF3</accession>
<accession>L0T948</accession>
<accession>P64971</accession>
<accession>Q50690</accession>
<name>Y2273_MYCTU</name>
<protein>
    <recommendedName>
        <fullName>Uncharacterized protein Rv2273</fullName>
    </recommendedName>
</protein>
<gene>
    <name type="ordered locus">Rv2273</name>
    <name type="ORF">MTCY339.37c</name>
</gene>
<feature type="chain" id="PRO_0000104001" description="Uncharacterized protein Rv2273">
    <location>
        <begin position="1"/>
        <end position="109"/>
    </location>
</feature>
<feature type="transmembrane region" description="Helical" evidence="1">
    <location>
        <begin position="18"/>
        <end position="38"/>
    </location>
</feature>
<feature type="transmembrane region" description="Helical" evidence="1">
    <location>
        <begin position="48"/>
        <end position="68"/>
    </location>
</feature>